<sequence>MKKIRPLTEADVTAESAFFMQRRQVLKALGISAAALSLPSTAQADLFSWFKGNDRPKAPAGKPLEFSQPAAWRSDLALTPEDKVTGYNNFYEFGLDKADPAANAGSLKTEPWTLKISGEVAKPFTLDYDDLTHRFPLEERIYRMRCVEAWSMVVPWIGFPLYKLLAQAQPTSHAKYVAFETLYAPDDMPGQKDRFIGGGLKYPYVEGLRLDEAMHPLTLMTVGVYGKALPPQNGAPIRLIVPWKYGFKGIKSIVSIKLTRERPPTTWNLSAPNEYGFYANVNPHVDHPRWSQATERFIGSGGILDVQRQPTLLFNGYANEVASLYRGLNLRENF</sequence>
<organism>
    <name type="scientific">Salmonella paratyphi B (strain ATCC BAA-1250 / SPB7)</name>
    <dbReference type="NCBI Taxonomy" id="1016998"/>
    <lineage>
        <taxon>Bacteria</taxon>
        <taxon>Pseudomonadati</taxon>
        <taxon>Pseudomonadota</taxon>
        <taxon>Gammaproteobacteria</taxon>
        <taxon>Enterobacterales</taxon>
        <taxon>Enterobacteriaceae</taxon>
        <taxon>Salmonella</taxon>
    </lineage>
</organism>
<reference key="1">
    <citation type="submission" date="2007-11" db="EMBL/GenBank/DDBJ databases">
        <authorList>
            <consortium name="The Salmonella enterica serovar Paratyphi B Genome Sequencing Project"/>
            <person name="McClelland M."/>
            <person name="Sanderson E.K."/>
            <person name="Porwollik S."/>
            <person name="Spieth J."/>
            <person name="Clifton W.S."/>
            <person name="Fulton R."/>
            <person name="Cordes M."/>
            <person name="Wollam A."/>
            <person name="Shah N."/>
            <person name="Pepin K."/>
            <person name="Bhonagiri V."/>
            <person name="Nash W."/>
            <person name="Johnson M."/>
            <person name="Thiruvilangam P."/>
            <person name="Wilson R."/>
        </authorList>
    </citation>
    <scope>NUCLEOTIDE SEQUENCE [LARGE SCALE GENOMIC DNA]</scope>
    <source>
        <strain>ATCC BAA-1250 / SPB7</strain>
    </source>
</reference>
<evidence type="ECO:0000255" key="1">
    <source>
        <dbReference type="HAMAP-Rule" id="MF_01206"/>
    </source>
</evidence>
<comment type="function">
    <text evidence="1">Part of the MsrPQ system that repairs oxidized periplasmic proteins containing methionine sulfoxide residues (Met-O), using respiratory chain electrons. Thus protects these proteins from oxidative-stress damage caused by reactive species of oxygen and chlorine generated by the host defense mechanisms. MsrPQ is essential for the maintenance of envelope integrity under bleach stress, rescuing a wide series of structurally unrelated periplasmic proteins from methionine oxidation, including the primary periplasmic chaperone SurA and the lipoprotein Pal. The catalytic subunit MsrP is non-stereospecific, being able to reduce both (R-) and (S-) diastereoisomers of methionine sulfoxide.</text>
</comment>
<comment type="catalytic activity">
    <reaction evidence="1">
        <text>L-methionyl-[protein] + a quinone + H2O = L-methionyl-(S)-S-oxide-[protein] + a quinol</text>
        <dbReference type="Rhea" id="RHEA:51292"/>
        <dbReference type="Rhea" id="RHEA-COMP:12313"/>
        <dbReference type="Rhea" id="RHEA-COMP:12315"/>
        <dbReference type="ChEBI" id="CHEBI:15377"/>
        <dbReference type="ChEBI" id="CHEBI:16044"/>
        <dbReference type="ChEBI" id="CHEBI:24646"/>
        <dbReference type="ChEBI" id="CHEBI:44120"/>
        <dbReference type="ChEBI" id="CHEBI:132124"/>
    </reaction>
</comment>
<comment type="catalytic activity">
    <reaction evidence="1">
        <text>L-methionyl-[protein] + a quinone + H2O = L-methionyl-(R)-S-oxide-[protein] + a quinol</text>
        <dbReference type="Rhea" id="RHEA:51296"/>
        <dbReference type="Rhea" id="RHEA-COMP:12313"/>
        <dbReference type="Rhea" id="RHEA-COMP:12314"/>
        <dbReference type="ChEBI" id="CHEBI:15377"/>
        <dbReference type="ChEBI" id="CHEBI:16044"/>
        <dbReference type="ChEBI" id="CHEBI:24646"/>
        <dbReference type="ChEBI" id="CHEBI:45764"/>
        <dbReference type="ChEBI" id="CHEBI:132124"/>
    </reaction>
</comment>
<comment type="cofactor">
    <cofactor evidence="1">
        <name>Mo-molybdopterin</name>
        <dbReference type="ChEBI" id="CHEBI:71302"/>
    </cofactor>
    <text evidence="1">Binds 1 Mo-molybdopterin (Mo-MPT) cofactor per subunit.</text>
</comment>
<comment type="subunit">
    <text evidence="1">Heterodimer of a catalytic subunit (MsrP) and a heme-binding subunit (MsrQ).</text>
</comment>
<comment type="subcellular location">
    <subcellularLocation>
        <location evidence="1">Periplasm</location>
    </subcellularLocation>
    <text evidence="1">Is attached to the inner membrane when interacting with the MsrQ subunit.</text>
</comment>
<comment type="PTM">
    <text evidence="1">Predicted to be exported by the Tat system. The position of the signal peptide cleavage has not been experimentally proven.</text>
</comment>
<comment type="similarity">
    <text evidence="1">Belongs to the MsrP family.</text>
</comment>
<accession>A9N876</accession>
<feature type="signal peptide" description="Tat-type signal" evidence="1">
    <location>
        <begin position="1"/>
        <end position="44"/>
    </location>
</feature>
<feature type="chain" id="PRO_1000085522" description="Protein-methionine-sulfoxide reductase catalytic subunit MsrP" evidence="1">
    <location>
        <begin position="45"/>
        <end position="334"/>
    </location>
</feature>
<feature type="binding site" evidence="1">
    <location>
        <position position="88"/>
    </location>
    <ligand>
        <name>Mo-molybdopterin</name>
        <dbReference type="ChEBI" id="CHEBI:71302"/>
    </ligand>
</feature>
<feature type="binding site" evidence="1">
    <location>
        <begin position="91"/>
        <end position="92"/>
    </location>
    <ligand>
        <name>Mo-molybdopterin</name>
        <dbReference type="ChEBI" id="CHEBI:71302"/>
    </ligand>
</feature>
<feature type="binding site" evidence="1">
    <location>
        <position position="146"/>
    </location>
    <ligand>
        <name>Mo-molybdopterin</name>
        <dbReference type="ChEBI" id="CHEBI:71302"/>
    </ligand>
    <ligandPart>
        <name>Mo</name>
        <dbReference type="ChEBI" id="CHEBI:28685"/>
    </ligandPart>
</feature>
<feature type="binding site" evidence="1">
    <location>
        <position position="181"/>
    </location>
    <ligand>
        <name>Mo-molybdopterin</name>
        <dbReference type="ChEBI" id="CHEBI:71302"/>
    </ligand>
</feature>
<feature type="binding site" evidence="1">
    <location>
        <position position="233"/>
    </location>
    <ligand>
        <name>Mo-molybdopterin</name>
        <dbReference type="ChEBI" id="CHEBI:71302"/>
    </ligand>
</feature>
<feature type="binding site" evidence="1">
    <location>
        <position position="238"/>
    </location>
    <ligand>
        <name>Mo-molybdopterin</name>
        <dbReference type="ChEBI" id="CHEBI:71302"/>
    </ligand>
</feature>
<feature type="binding site" evidence="1">
    <location>
        <begin position="249"/>
        <end position="251"/>
    </location>
    <ligand>
        <name>Mo-molybdopterin</name>
        <dbReference type="ChEBI" id="CHEBI:71302"/>
    </ligand>
</feature>
<name>MSRP_SALPB</name>
<dbReference type="EC" id="1.8.5.-" evidence="1"/>
<dbReference type="EMBL" id="CP000886">
    <property type="protein sequence ID" value="ABX69529.1"/>
    <property type="molecule type" value="Genomic_DNA"/>
</dbReference>
<dbReference type="RefSeq" id="WP_000723876.1">
    <property type="nucleotide sequence ID" value="NC_010102.1"/>
</dbReference>
<dbReference type="SMR" id="A9N876"/>
<dbReference type="KEGG" id="spq:SPAB_04206"/>
<dbReference type="PATRIC" id="fig|1016998.12.peg.3961"/>
<dbReference type="HOGENOM" id="CLU_045520_0_0_6"/>
<dbReference type="BioCyc" id="SENT1016998:SPAB_RS17115-MONOMER"/>
<dbReference type="Proteomes" id="UP000008556">
    <property type="component" value="Chromosome"/>
</dbReference>
<dbReference type="GO" id="GO:0042597">
    <property type="term" value="C:periplasmic space"/>
    <property type="evidence" value="ECO:0007669"/>
    <property type="project" value="UniProtKB-SubCell"/>
</dbReference>
<dbReference type="GO" id="GO:0046872">
    <property type="term" value="F:metal ion binding"/>
    <property type="evidence" value="ECO:0007669"/>
    <property type="project" value="UniProtKB-KW"/>
</dbReference>
<dbReference type="GO" id="GO:0043546">
    <property type="term" value="F:molybdopterin cofactor binding"/>
    <property type="evidence" value="ECO:0007669"/>
    <property type="project" value="UniProtKB-UniRule"/>
</dbReference>
<dbReference type="GO" id="GO:0016672">
    <property type="term" value="F:oxidoreductase activity, acting on a sulfur group of donors, quinone or similar compound as acceptor"/>
    <property type="evidence" value="ECO:0007669"/>
    <property type="project" value="UniProtKB-UniRule"/>
</dbReference>
<dbReference type="GO" id="GO:0030091">
    <property type="term" value="P:protein repair"/>
    <property type="evidence" value="ECO:0007669"/>
    <property type="project" value="UniProtKB-UniRule"/>
</dbReference>
<dbReference type="CDD" id="cd02107">
    <property type="entry name" value="YedY_like_Moco"/>
    <property type="match status" value="1"/>
</dbReference>
<dbReference type="FunFam" id="3.90.420.10:FF:000001">
    <property type="entry name" value="Protein-methionine-sulfoxide reductase catalytic subunit MsrP"/>
    <property type="match status" value="1"/>
</dbReference>
<dbReference type="Gene3D" id="3.90.420.10">
    <property type="entry name" value="Oxidoreductase, molybdopterin-binding domain"/>
    <property type="match status" value="1"/>
</dbReference>
<dbReference type="HAMAP" id="MF_01206">
    <property type="entry name" value="MsrP"/>
    <property type="match status" value="1"/>
</dbReference>
<dbReference type="InterPro" id="IPR022867">
    <property type="entry name" value="MsrP"/>
</dbReference>
<dbReference type="InterPro" id="IPR000572">
    <property type="entry name" value="OxRdtase_Mopterin-bd_dom"/>
</dbReference>
<dbReference type="InterPro" id="IPR036374">
    <property type="entry name" value="OxRdtase_Mopterin-bd_sf"/>
</dbReference>
<dbReference type="InterPro" id="IPR006311">
    <property type="entry name" value="TAT_signal"/>
</dbReference>
<dbReference type="NCBIfam" id="NF003767">
    <property type="entry name" value="PRK05363.1"/>
    <property type="match status" value="1"/>
</dbReference>
<dbReference type="PANTHER" id="PTHR43032">
    <property type="entry name" value="PROTEIN-METHIONINE-SULFOXIDE REDUCTASE"/>
    <property type="match status" value="1"/>
</dbReference>
<dbReference type="PANTHER" id="PTHR43032:SF3">
    <property type="entry name" value="PROTEIN-METHIONINE-SULFOXIDE REDUCTASE CATALYTIC SUBUNIT MSRP"/>
    <property type="match status" value="1"/>
</dbReference>
<dbReference type="Pfam" id="PF00174">
    <property type="entry name" value="Oxidored_molyb"/>
    <property type="match status" value="1"/>
</dbReference>
<dbReference type="SUPFAM" id="SSF56524">
    <property type="entry name" value="Oxidoreductase molybdopterin-binding domain"/>
    <property type="match status" value="1"/>
</dbReference>
<dbReference type="PROSITE" id="PS51318">
    <property type="entry name" value="TAT"/>
    <property type="match status" value="1"/>
</dbReference>
<protein>
    <recommendedName>
        <fullName evidence="1">Protein-methionine-sulfoxide reductase catalytic subunit MsrP</fullName>
        <ecNumber evidence="1">1.8.5.-</ecNumber>
    </recommendedName>
</protein>
<keyword id="KW-0479">Metal-binding</keyword>
<keyword id="KW-0500">Molybdenum</keyword>
<keyword id="KW-0560">Oxidoreductase</keyword>
<keyword id="KW-0574">Periplasm</keyword>
<keyword id="KW-0732">Signal</keyword>
<gene>
    <name evidence="1" type="primary">msrP</name>
    <name type="ordered locus">SPAB_04206</name>
</gene>
<proteinExistence type="inferred from homology"/>